<sequence length="116" mass="13846">MKYFVVALTLAVAFVCIEECKTVEIGYAVSEDFDQNEIDNEEARQAFKTFTPDWNKIRNDAKRMQDNLEQMKKRFNLNLEEARQAFQTFKPDWNKIRYDAMKMQTSLGQMKKRFNL</sequence>
<keyword id="KW-0903">Direct protein sequencing</keyword>
<keyword id="KW-0873">Pyrrolidone carboxylic acid</keyword>
<keyword id="KW-0964">Secreted</keyword>
<keyword id="KW-0732">Signal</keyword>
<keyword id="KW-0800">Toxin</keyword>
<organism>
    <name type="scientific">Lachesana tarabaevi</name>
    <name type="common">Spider</name>
    <dbReference type="NCBI Taxonomy" id="379576"/>
    <lineage>
        <taxon>Eukaryota</taxon>
        <taxon>Metazoa</taxon>
        <taxon>Ecdysozoa</taxon>
        <taxon>Arthropoda</taxon>
        <taxon>Chelicerata</taxon>
        <taxon>Arachnida</taxon>
        <taxon>Araneae</taxon>
        <taxon>Araneomorphae</taxon>
        <taxon>Entelegynae</taxon>
        <taxon>Entelegynae incertae sedis</taxon>
        <taxon>Zodariidae</taxon>
        <taxon>Lachesana</taxon>
    </lineage>
</organism>
<proteinExistence type="evidence at protein level"/>
<protein>
    <recommendedName>
        <fullName evidence="6">M-zodatoxin-Lt6a/b</fullName>
        <shortName evidence="6">M-ZDTX-Lt6a/b</shortName>
    </recommendedName>
    <alternativeName>
        <fullName evidence="4">Latarcin 6-1</fullName>
        <shortName evidence="4">Ltc 6-1</shortName>
    </alternativeName>
    <component>
        <recommendedName>
            <fullName evidence="6">M-zodatoxin-Lt6b</fullName>
            <shortName evidence="6">M-ZDTX-Lt6b</shortName>
        </recommendedName>
        <alternativeName>
            <fullName>Latarcin-6b</fullName>
            <shortName>Ltc-6b</shortName>
        </alternativeName>
    </component>
    <component>
        <recommendedName>
            <fullName evidence="6">M-zodatoxin-Lt6a</fullName>
            <shortName evidence="6">M-ZDTX-Lt6a</shortName>
        </recommendedName>
        <alternativeName>
            <fullName evidence="5">Latarcin-6a</fullName>
            <shortName evidence="5">Ltc-6a</shortName>
        </alternativeName>
    </component>
</protein>
<name>LAT61_LACTA</name>
<reference key="1">
    <citation type="journal article" date="2006" name="J. Biol. Chem.">
        <title>Latarcins, antimicrobial and cytolytic peptides from the venom of the spider Lachesana tarabaevi (Zodariidae) that exemplify biomolecular diversity.</title>
        <authorList>
            <person name="Kozlov S.A."/>
            <person name="Vassilevski A.A."/>
            <person name="Feofanov A.V."/>
            <person name="Surovoy A.Y."/>
            <person name="Karpunin D.V."/>
            <person name="Grishin E.V."/>
        </authorList>
    </citation>
    <scope>NUCLEOTIDE SEQUENCE [MRNA]</scope>
    <scope>SYNTHESIS OF 84-116</scope>
    <scope>FUNCTION</scope>
    <scope>SUBCELLULAR LOCATION</scope>
    <scope>DOMAIN</scope>
    <source>
        <tissue>Venom</tissue>
        <tissue>Venom gland</tissue>
    </source>
</reference>
<reference key="2">
    <citation type="journal article" date="2016" name="Biochem. J.">
        <title>Lachesana tarabaevi, an expert in membrane-active toxins.</title>
        <authorList>
            <person name="Kuzmenkov A.I."/>
            <person name="Sachkova M.Y."/>
            <person name="Kovalchuk S.I."/>
            <person name="Grishin E.V."/>
            <person name="Vassilevski A.A."/>
        </authorList>
    </citation>
    <scope>PROTEIN SEQUENCE OF 84-116</scope>
    <scope>SUBCELLULAR LOCATION</scope>
    <scope>PQM MOTIF</scope>
    <scope>MASS SPECTROMETRY</scope>
    <scope>PYROGLUTAMATE FORMATION AT GLN-84</scope>
    <source>
        <tissue>Venom</tissue>
    </source>
</reference>
<comment type="function">
    <molecule>M-zodatoxin-Lt6a</molecule>
    <text evidence="2">Does not have antimicrobial activity against neither Gram-positive bacteria (A.globiformis VKM Ac-1112 (MIC&gt;70 uM), and B.subtilis VKM B-501 (MIC&gt;70 uM)), nor Gram-negative bacteria (E.coli DH5-alpha (MIC&gt;70 uM), E.coli MH1 (MIC&gt;70 uM), and P.aeruginosa PAO1 (MIC&gt;70 uM)), nor yeasts (P.pastoris GS115 (MIC&gt;70 uM), and S.cerevisiae Y190 (MIC&gt;70 uM)). Does not have hemolytic activity against rabbit erythrocytes. However, it causes some conductance changes in planar bilayer membranes, without membrane rupture, suggesting a cytolytic function on other biological targets. It causes paralysis, but is not lethal when injected into insect (M.domestica) larvae.</text>
</comment>
<comment type="subcellular location">
    <subcellularLocation>
        <location evidence="2 3">Secreted</location>
    </subcellularLocation>
</comment>
<comment type="tissue specificity">
    <text evidence="7 8">Expressed by the venom gland.</text>
</comment>
<comment type="domain">
    <text evidence="4">The mature peptides (45-79 and 84-116) probably form alpha-helices which disrupt target cell membranes.</text>
</comment>
<comment type="PTM">
    <text evidence="5">Cleavage of the propeptide depends on the processing quadruplet motif (XXXR, with at least one of X being E).</text>
</comment>
<comment type="mass spectrometry" mass="4035.1" method="MALDI" evidence="3">
    <molecule>M-zodatoxin-Lt6a</molecule>
    <text>M-zodatoxin-Lt6a.</text>
</comment>
<comment type="similarity">
    <text evidence="6">Belongs to the cationic peptide 03 (latarcin) family. 06 subfamily.</text>
</comment>
<evidence type="ECO:0000255" key="1"/>
<evidence type="ECO:0000269" key="2">
    <source>
    </source>
</evidence>
<evidence type="ECO:0000269" key="3">
    <source>
    </source>
</evidence>
<evidence type="ECO:0000303" key="4">
    <source>
    </source>
</evidence>
<evidence type="ECO:0000303" key="5">
    <source>
    </source>
</evidence>
<evidence type="ECO:0000305" key="6"/>
<evidence type="ECO:0000305" key="7">
    <source>
    </source>
</evidence>
<evidence type="ECO:0000305" key="8">
    <source>
    </source>
</evidence>
<feature type="signal peptide" evidence="1">
    <location>
        <begin position="1"/>
        <end position="22"/>
    </location>
</feature>
<feature type="propeptide" id="PRO_0000249750">
    <location>
        <begin position="23"/>
        <end position="44"/>
    </location>
</feature>
<feature type="peptide" id="PRO_0000249751" description="M-zodatoxin-Lt6b">
    <location>
        <begin position="45"/>
        <end position="79"/>
    </location>
</feature>
<feature type="propeptide" id="PRO_0000249752">
    <location>
        <begin position="80"/>
        <end position="83"/>
    </location>
</feature>
<feature type="peptide" id="PRO_0000249753" description="M-zodatoxin-Lt6a" evidence="3">
    <location>
        <begin position="84"/>
        <end position="116"/>
    </location>
</feature>
<feature type="short sequence motif" description="Processing quadruplet motif 1" evidence="5">
    <location>
        <begin position="41"/>
        <end position="44"/>
    </location>
</feature>
<feature type="short sequence motif" description="Processing quadruplet motif 2" evidence="5">
    <location>
        <begin position="80"/>
        <end position="83"/>
    </location>
</feature>
<feature type="modified residue" description="Pyrrolidone carboxylic acid" evidence="3">
    <location>
        <position position="84"/>
    </location>
</feature>
<dbReference type="EMBL" id="AM232691">
    <property type="protein sequence ID" value="CAJ81651.1"/>
    <property type="molecule type" value="mRNA"/>
</dbReference>
<dbReference type="SMR" id="Q1ELU8"/>
<dbReference type="ArachnoServer" id="AS000057">
    <property type="toxin name" value="M-zodatoxin-Lt6a"/>
</dbReference>
<dbReference type="ArachnoServer" id="AS000762">
    <property type="toxin name" value="M-zodatoxin-Lt6b"/>
</dbReference>
<dbReference type="GO" id="GO:0005576">
    <property type="term" value="C:extracellular region"/>
    <property type="evidence" value="ECO:0007669"/>
    <property type="project" value="UniProtKB-SubCell"/>
</dbReference>
<dbReference type="GO" id="GO:0090729">
    <property type="term" value="F:toxin activity"/>
    <property type="evidence" value="ECO:0007669"/>
    <property type="project" value="UniProtKB-KW"/>
</dbReference>
<dbReference type="InterPro" id="IPR018802">
    <property type="entry name" value="Latarcin_precursor"/>
</dbReference>
<dbReference type="Pfam" id="PF10279">
    <property type="entry name" value="Latarcin"/>
    <property type="match status" value="2"/>
</dbReference>
<accession>Q1ELU8</accession>